<comment type="function">
    <text>Electron carrier protein. The oxidized form of the cytochrome c heme group can accept an electron from the heme group of the cytochrome c1 subunit of cytochrome reductase. Cytochrome c then transfers this electron to the cytochrome oxidase complex, the final protein carrier in the mitochondrial electron-transport chain.</text>
</comment>
<comment type="subcellular location">
    <subcellularLocation>
        <location>Mitochondrion intermembrane space</location>
    </subcellularLocation>
    <text>Loosely associated with the inner membrane.</text>
</comment>
<comment type="PTM">
    <text>Binds 1 heme c group covalently per subunit.</text>
</comment>
<comment type="similarity">
    <text evidence="2">Belongs to the cytochrome c family.</text>
</comment>
<comment type="online information" name="Protein Spotlight">
    <link uri="https://www.proteinspotlight.org/back_issues/076"/>
    <text>Life shuttle - Issue 76 of November 2006</text>
</comment>
<dbReference type="EMBL" id="J01318">
    <property type="protein sequence ID" value="AAA35300.1"/>
    <property type="molecule type" value="Genomic_DNA"/>
</dbReference>
<dbReference type="EMBL" id="CU329672">
    <property type="protein sequence ID" value="CAB41053.1"/>
    <property type="molecule type" value="Genomic_DNA"/>
</dbReference>
<dbReference type="PIR" id="T41220">
    <property type="entry name" value="CCZP"/>
</dbReference>
<dbReference type="RefSeq" id="NP_588296.1">
    <property type="nucleotide sequence ID" value="NM_001023286.2"/>
</dbReference>
<dbReference type="SMR" id="P00046"/>
<dbReference type="BioGRID" id="275718">
    <property type="interactions" value="2"/>
</dbReference>
<dbReference type="FunCoup" id="P00046">
    <property type="interactions" value="294"/>
</dbReference>
<dbReference type="STRING" id="284812.P00046"/>
<dbReference type="iPTMnet" id="P00046"/>
<dbReference type="PaxDb" id="4896-SPCC191.07.1"/>
<dbReference type="EnsemblFungi" id="SPCC191.07.1">
    <property type="protein sequence ID" value="SPCC191.07.1:pep"/>
    <property type="gene ID" value="SPCC191.07"/>
</dbReference>
<dbReference type="GeneID" id="2539146"/>
<dbReference type="KEGG" id="spo:2539146"/>
<dbReference type="PomBase" id="SPCC191.07">
    <property type="gene designation" value="cyc1"/>
</dbReference>
<dbReference type="VEuPathDB" id="FungiDB:SPCC191.07"/>
<dbReference type="eggNOG" id="KOG3453">
    <property type="taxonomic scope" value="Eukaryota"/>
</dbReference>
<dbReference type="HOGENOM" id="CLU_060944_3_0_1"/>
<dbReference type="InParanoid" id="P00046"/>
<dbReference type="OMA" id="KARCAQC"/>
<dbReference type="PhylomeDB" id="P00046"/>
<dbReference type="Reactome" id="R-SPO-111457">
    <property type="pathway name" value="Release of apoptotic factors from the mitochondria"/>
</dbReference>
<dbReference type="Reactome" id="R-SPO-3299685">
    <property type="pathway name" value="Detoxification of Reactive Oxygen Species"/>
</dbReference>
<dbReference type="Reactome" id="R-SPO-5620971">
    <property type="pathway name" value="Pyroptosis"/>
</dbReference>
<dbReference type="Reactome" id="R-SPO-611105">
    <property type="pathway name" value="Respiratory electron transport"/>
</dbReference>
<dbReference type="PRO" id="PR:P00046"/>
<dbReference type="Proteomes" id="UP000002485">
    <property type="component" value="Chromosome III"/>
</dbReference>
<dbReference type="GO" id="GO:0005758">
    <property type="term" value="C:mitochondrial intermembrane space"/>
    <property type="evidence" value="ECO:0000318"/>
    <property type="project" value="GO_Central"/>
</dbReference>
<dbReference type="GO" id="GO:0098803">
    <property type="term" value="C:respiratory chain complex"/>
    <property type="evidence" value="ECO:0000266"/>
    <property type="project" value="PomBase"/>
</dbReference>
<dbReference type="GO" id="GO:0009055">
    <property type="term" value="F:electron transfer activity"/>
    <property type="evidence" value="ECO:0000318"/>
    <property type="project" value="GO_Central"/>
</dbReference>
<dbReference type="GO" id="GO:0020037">
    <property type="term" value="F:heme binding"/>
    <property type="evidence" value="ECO:0007669"/>
    <property type="project" value="InterPro"/>
</dbReference>
<dbReference type="GO" id="GO:0046872">
    <property type="term" value="F:metal ion binding"/>
    <property type="evidence" value="ECO:0007669"/>
    <property type="project" value="UniProtKB-KW"/>
</dbReference>
<dbReference type="GO" id="GO:0042775">
    <property type="term" value="P:mitochondrial ATP synthesis coupled electron transport"/>
    <property type="evidence" value="ECO:0000316"/>
    <property type="project" value="PomBase"/>
</dbReference>
<dbReference type="GO" id="GO:0006123">
    <property type="term" value="P:mitochondrial electron transport, cytochrome c to oxygen"/>
    <property type="evidence" value="ECO:0000318"/>
    <property type="project" value="GO_Central"/>
</dbReference>
<dbReference type="GO" id="GO:0006122">
    <property type="term" value="P:mitochondrial electron transport, ubiquinol to cytochrome c"/>
    <property type="evidence" value="ECO:0000318"/>
    <property type="project" value="GO_Central"/>
</dbReference>
<dbReference type="FunFam" id="1.10.760.10:FF:000001">
    <property type="entry name" value="Cytochrome c iso-1"/>
    <property type="match status" value="1"/>
</dbReference>
<dbReference type="Gene3D" id="1.10.760.10">
    <property type="entry name" value="Cytochrome c-like domain"/>
    <property type="match status" value="1"/>
</dbReference>
<dbReference type="InterPro" id="IPR009056">
    <property type="entry name" value="Cyt_c-like_dom"/>
</dbReference>
<dbReference type="InterPro" id="IPR036909">
    <property type="entry name" value="Cyt_c-like_dom_sf"/>
</dbReference>
<dbReference type="InterPro" id="IPR002327">
    <property type="entry name" value="Cyt_c_1A/1B"/>
</dbReference>
<dbReference type="PANTHER" id="PTHR11961">
    <property type="entry name" value="CYTOCHROME C"/>
    <property type="match status" value="1"/>
</dbReference>
<dbReference type="Pfam" id="PF00034">
    <property type="entry name" value="Cytochrom_C"/>
    <property type="match status" value="1"/>
</dbReference>
<dbReference type="PRINTS" id="PR00604">
    <property type="entry name" value="CYTCHRMECIAB"/>
</dbReference>
<dbReference type="SUPFAM" id="SSF46626">
    <property type="entry name" value="Cytochrome c"/>
    <property type="match status" value="1"/>
</dbReference>
<dbReference type="PROSITE" id="PS51007">
    <property type="entry name" value="CYTC"/>
    <property type="match status" value="1"/>
</dbReference>
<name>CYC_SCHPO</name>
<evidence type="ECO:0000269" key="1">
    <source>
    </source>
</evidence>
<evidence type="ECO:0000305" key="2"/>
<protein>
    <recommendedName>
        <fullName>Cytochrome c</fullName>
    </recommendedName>
</protein>
<reference key="1">
    <citation type="journal article" date="1982" name="Mol. Cell. Biol.">
        <title>Structure of the Schizosaccharomyces pombe cytochrome c gene.</title>
        <authorList>
            <person name="Russell P.R."/>
            <person name="Hall B.D."/>
        </authorList>
    </citation>
    <scope>NUCLEOTIDE SEQUENCE [GENOMIC DNA]</scope>
</reference>
<reference key="2">
    <citation type="journal article" date="2002" name="Nature">
        <title>The genome sequence of Schizosaccharomyces pombe.</title>
        <authorList>
            <person name="Wood V."/>
            <person name="Gwilliam R."/>
            <person name="Rajandream M.A."/>
            <person name="Lyne M.H."/>
            <person name="Lyne R."/>
            <person name="Stewart A."/>
            <person name="Sgouros J.G."/>
            <person name="Peat N."/>
            <person name="Hayles J."/>
            <person name="Baker S.G."/>
            <person name="Basham D."/>
            <person name="Bowman S."/>
            <person name="Brooks K."/>
            <person name="Brown D."/>
            <person name="Brown S."/>
            <person name="Chillingworth T."/>
            <person name="Churcher C.M."/>
            <person name="Collins M."/>
            <person name="Connor R."/>
            <person name="Cronin A."/>
            <person name="Davis P."/>
            <person name="Feltwell T."/>
            <person name="Fraser A."/>
            <person name="Gentles S."/>
            <person name="Goble A."/>
            <person name="Hamlin N."/>
            <person name="Harris D.E."/>
            <person name="Hidalgo J."/>
            <person name="Hodgson G."/>
            <person name="Holroyd S."/>
            <person name="Hornsby T."/>
            <person name="Howarth S."/>
            <person name="Huckle E.J."/>
            <person name="Hunt S."/>
            <person name="Jagels K."/>
            <person name="James K.D."/>
            <person name="Jones L."/>
            <person name="Jones M."/>
            <person name="Leather S."/>
            <person name="McDonald S."/>
            <person name="McLean J."/>
            <person name="Mooney P."/>
            <person name="Moule S."/>
            <person name="Mungall K.L."/>
            <person name="Murphy L.D."/>
            <person name="Niblett D."/>
            <person name="Odell C."/>
            <person name="Oliver K."/>
            <person name="O'Neil S."/>
            <person name="Pearson D."/>
            <person name="Quail M.A."/>
            <person name="Rabbinowitsch E."/>
            <person name="Rutherford K.M."/>
            <person name="Rutter S."/>
            <person name="Saunders D."/>
            <person name="Seeger K."/>
            <person name="Sharp S."/>
            <person name="Skelton J."/>
            <person name="Simmonds M.N."/>
            <person name="Squares R."/>
            <person name="Squares S."/>
            <person name="Stevens K."/>
            <person name="Taylor K."/>
            <person name="Taylor R.G."/>
            <person name="Tivey A."/>
            <person name="Walsh S.V."/>
            <person name="Warren T."/>
            <person name="Whitehead S."/>
            <person name="Woodward J.R."/>
            <person name="Volckaert G."/>
            <person name="Aert R."/>
            <person name="Robben J."/>
            <person name="Grymonprez B."/>
            <person name="Weltjens I."/>
            <person name="Vanstreels E."/>
            <person name="Rieger M."/>
            <person name="Schaefer M."/>
            <person name="Mueller-Auer S."/>
            <person name="Gabel C."/>
            <person name="Fuchs M."/>
            <person name="Duesterhoeft A."/>
            <person name="Fritzc C."/>
            <person name="Holzer E."/>
            <person name="Moestl D."/>
            <person name="Hilbert H."/>
            <person name="Borzym K."/>
            <person name="Langer I."/>
            <person name="Beck A."/>
            <person name="Lehrach H."/>
            <person name="Reinhardt R."/>
            <person name="Pohl T.M."/>
            <person name="Eger P."/>
            <person name="Zimmermann W."/>
            <person name="Wedler H."/>
            <person name="Wambutt R."/>
            <person name="Purnelle B."/>
            <person name="Goffeau A."/>
            <person name="Cadieu E."/>
            <person name="Dreano S."/>
            <person name="Gloux S."/>
            <person name="Lelaure V."/>
            <person name="Mottier S."/>
            <person name="Galibert F."/>
            <person name="Aves S.J."/>
            <person name="Xiang Z."/>
            <person name="Hunt C."/>
            <person name="Moore K."/>
            <person name="Hurst S.M."/>
            <person name="Lucas M."/>
            <person name="Rochet M."/>
            <person name="Gaillardin C."/>
            <person name="Tallada V.A."/>
            <person name="Garzon A."/>
            <person name="Thode G."/>
            <person name="Daga R.R."/>
            <person name="Cruzado L."/>
            <person name="Jimenez J."/>
            <person name="Sanchez M."/>
            <person name="del Rey F."/>
            <person name="Benito J."/>
            <person name="Dominguez A."/>
            <person name="Revuelta J.L."/>
            <person name="Moreno S."/>
            <person name="Armstrong J."/>
            <person name="Forsburg S.L."/>
            <person name="Cerutti L."/>
            <person name="Lowe T."/>
            <person name="McCombie W.R."/>
            <person name="Paulsen I."/>
            <person name="Potashkin J."/>
            <person name="Shpakovski G.V."/>
            <person name="Ussery D."/>
            <person name="Barrell B.G."/>
            <person name="Nurse P."/>
        </authorList>
    </citation>
    <scope>NUCLEOTIDE SEQUENCE [LARGE SCALE GENOMIC DNA]</scope>
    <source>
        <strain>972 / ATCC 24843</strain>
    </source>
</reference>
<reference key="3">
    <citation type="journal article" date="1978" name="Eur. J. Biochem.">
        <title>Cytochrome c from Schizosaccharomyces pombe. 2. Amino-acid sequence.</title>
        <authorList>
            <person name="Simon-Becam A.-M."/>
            <person name="Claisse M."/>
            <person name="Lederer F."/>
        </authorList>
    </citation>
    <scope>PROTEIN SEQUENCE OF 2-109</scope>
    <scope>METHYLATION AT LYS-77</scope>
</reference>
<proteinExistence type="evidence at protein level"/>
<keyword id="KW-0903">Direct protein sequencing</keyword>
<keyword id="KW-0249">Electron transport</keyword>
<keyword id="KW-0349">Heme</keyword>
<keyword id="KW-0408">Iron</keyword>
<keyword id="KW-0479">Metal-binding</keyword>
<keyword id="KW-0488">Methylation</keyword>
<keyword id="KW-0496">Mitochondrion</keyword>
<keyword id="KW-1185">Reference proteome</keyword>
<keyword id="KW-0679">Respiratory chain</keyword>
<keyword id="KW-0813">Transport</keyword>
<accession>P00046</accession>
<gene>
    <name type="primary">cyc1</name>
    <name type="ORF">SPCC191.07</name>
</gene>
<sequence length="109" mass="12022">MPYAPGDEKKGASLFKTRCAQCHTVEKGGANKVGPNLHGVFGRKTGQAEGFSYTEANRDKGITWDEETLFAYLENPKKYIPGTKMAFAGFKKPADRNNVITYLKKATSE</sequence>
<feature type="initiator methionine" description="Removed" evidence="1">
    <location>
        <position position="1"/>
    </location>
</feature>
<feature type="chain" id="PRO_0000108333" description="Cytochrome c">
    <location>
        <begin position="2"/>
        <end position="109"/>
    </location>
</feature>
<feature type="binding site" description="covalent">
    <location>
        <position position="19"/>
    </location>
    <ligand>
        <name>heme c</name>
        <dbReference type="ChEBI" id="CHEBI:61717"/>
    </ligand>
</feature>
<feature type="binding site" description="covalent">
    <location>
        <position position="22"/>
    </location>
    <ligand>
        <name>heme c</name>
        <dbReference type="ChEBI" id="CHEBI:61717"/>
    </ligand>
</feature>
<feature type="binding site" description="axial binding residue">
    <location>
        <position position="23"/>
    </location>
    <ligand>
        <name>heme c</name>
        <dbReference type="ChEBI" id="CHEBI:61717"/>
    </ligand>
    <ligandPart>
        <name>Fe</name>
        <dbReference type="ChEBI" id="CHEBI:18248"/>
    </ligandPart>
</feature>
<feature type="binding site" description="axial binding residue">
    <location>
        <position position="85"/>
    </location>
    <ligand>
        <name>heme c</name>
        <dbReference type="ChEBI" id="CHEBI:61717"/>
    </ligand>
    <ligandPart>
        <name>Fe</name>
        <dbReference type="ChEBI" id="CHEBI:18248"/>
    </ligandPart>
</feature>
<feature type="modified residue" description="N6,N6,N6-trimethyllysine" evidence="1">
    <location>
        <position position="77"/>
    </location>
</feature>
<feature type="sequence conflict" description="In Ref. 3; AA sequence." evidence="2" ref="3">
    <original>R</original>
    <variation>K</variation>
    <location>
        <position position="58"/>
    </location>
</feature>
<feature type="sequence conflict" description="In Ref. 3; AA sequence." evidence="2" ref="3">
    <original>K</original>
    <variation>R</variation>
    <location>
        <position position="60"/>
    </location>
</feature>
<organism>
    <name type="scientific">Schizosaccharomyces pombe (strain 972 / ATCC 24843)</name>
    <name type="common">Fission yeast</name>
    <dbReference type="NCBI Taxonomy" id="284812"/>
    <lineage>
        <taxon>Eukaryota</taxon>
        <taxon>Fungi</taxon>
        <taxon>Dikarya</taxon>
        <taxon>Ascomycota</taxon>
        <taxon>Taphrinomycotina</taxon>
        <taxon>Schizosaccharomycetes</taxon>
        <taxon>Schizosaccharomycetales</taxon>
        <taxon>Schizosaccharomycetaceae</taxon>
        <taxon>Schizosaccharomyces</taxon>
    </lineage>
</organism>